<sequence>MTAPAELSPTLQLACDLIRRPSVTPVDADCQAQMMNRLGAVGFQLEPMRIEDVDNFWATHGSQDGPVLCFAGHTDVVPTGPVQQWQHEPFEALIDADGMLCGRGAADMKGSLASMVIASERFVQDYPNHRGKVAFLITSDEEGPAHHGTKAVVERLKARNERLDWCIVGEPSSTTLLGDVVKNGRRGSLGAKLTIRGKQGHVAYPHLARNPIHLAAPALAELAAEHWDEGNAFFPPTSFQISNLNSGTGATNVVPGELTALFNFRFSTESTVEGLQARVSAILDKHELDWSVDWALSGLPFLTEPGELLDAVAASIKGVTGRDTQPSTSGGTSDGRFIATMGTQVVELGPVNATIHQVDERILASDLDLLTEIYYQTLVRLLA</sequence>
<keyword id="KW-0028">Amino-acid biosynthesis</keyword>
<keyword id="KW-0170">Cobalt</keyword>
<keyword id="KW-0220">Diaminopimelate biosynthesis</keyword>
<keyword id="KW-0378">Hydrolase</keyword>
<keyword id="KW-0457">Lysine biosynthesis</keyword>
<keyword id="KW-0479">Metal-binding</keyword>
<keyword id="KW-0862">Zinc</keyword>
<proteinExistence type="inferred from homology"/>
<organism>
    <name type="scientific">Pseudomonas putida (strain ATCC 700007 / DSM 6899 / JCM 31910 / BCRC 17059 / LMG 24140 / F1)</name>
    <dbReference type="NCBI Taxonomy" id="351746"/>
    <lineage>
        <taxon>Bacteria</taxon>
        <taxon>Pseudomonadati</taxon>
        <taxon>Pseudomonadota</taxon>
        <taxon>Gammaproteobacteria</taxon>
        <taxon>Pseudomonadales</taxon>
        <taxon>Pseudomonadaceae</taxon>
        <taxon>Pseudomonas</taxon>
    </lineage>
</organism>
<accession>A5W863</accession>
<comment type="function">
    <text evidence="1">Catalyzes the hydrolysis of N-succinyl-L,L-diaminopimelic acid (SDAP), forming succinate and LL-2,6-diaminopimelate (DAP), an intermediate involved in the bacterial biosynthesis of lysine and meso-diaminopimelic acid, an essential component of bacterial cell walls.</text>
</comment>
<comment type="catalytic activity">
    <reaction evidence="1">
        <text>N-succinyl-(2S,6S)-2,6-diaminopimelate + H2O = (2S,6S)-2,6-diaminopimelate + succinate</text>
        <dbReference type="Rhea" id="RHEA:22608"/>
        <dbReference type="ChEBI" id="CHEBI:15377"/>
        <dbReference type="ChEBI" id="CHEBI:30031"/>
        <dbReference type="ChEBI" id="CHEBI:57609"/>
        <dbReference type="ChEBI" id="CHEBI:58087"/>
        <dbReference type="EC" id="3.5.1.18"/>
    </reaction>
</comment>
<comment type="cofactor">
    <cofactor evidence="1">
        <name>Zn(2+)</name>
        <dbReference type="ChEBI" id="CHEBI:29105"/>
    </cofactor>
    <cofactor evidence="1">
        <name>Co(2+)</name>
        <dbReference type="ChEBI" id="CHEBI:48828"/>
    </cofactor>
    <text evidence="1">Binds 2 Zn(2+) or Co(2+) ions per subunit.</text>
</comment>
<comment type="pathway">
    <text evidence="1">Amino-acid biosynthesis; L-lysine biosynthesis via DAP pathway; LL-2,6-diaminopimelate from (S)-tetrahydrodipicolinate (succinylase route): step 3/3.</text>
</comment>
<comment type="subunit">
    <text evidence="1">Homodimer.</text>
</comment>
<comment type="similarity">
    <text evidence="1">Belongs to the peptidase M20A family. DapE subfamily.</text>
</comment>
<dbReference type="EC" id="3.5.1.18" evidence="1"/>
<dbReference type="EMBL" id="CP000712">
    <property type="protein sequence ID" value="ABQ80323.1"/>
    <property type="molecule type" value="Genomic_DNA"/>
</dbReference>
<dbReference type="SMR" id="A5W863"/>
<dbReference type="KEGG" id="ppf:Pput_4199"/>
<dbReference type="eggNOG" id="COG0624">
    <property type="taxonomic scope" value="Bacteria"/>
</dbReference>
<dbReference type="HOGENOM" id="CLU_021802_4_0_6"/>
<dbReference type="UniPathway" id="UPA00034">
    <property type="reaction ID" value="UER00021"/>
</dbReference>
<dbReference type="GO" id="GO:0008777">
    <property type="term" value="F:acetylornithine deacetylase activity"/>
    <property type="evidence" value="ECO:0007669"/>
    <property type="project" value="TreeGrafter"/>
</dbReference>
<dbReference type="GO" id="GO:0050897">
    <property type="term" value="F:cobalt ion binding"/>
    <property type="evidence" value="ECO:0007669"/>
    <property type="project" value="UniProtKB-UniRule"/>
</dbReference>
<dbReference type="GO" id="GO:0009014">
    <property type="term" value="F:succinyl-diaminopimelate desuccinylase activity"/>
    <property type="evidence" value="ECO:0007669"/>
    <property type="project" value="UniProtKB-UniRule"/>
</dbReference>
<dbReference type="GO" id="GO:0008270">
    <property type="term" value="F:zinc ion binding"/>
    <property type="evidence" value="ECO:0007669"/>
    <property type="project" value="UniProtKB-UniRule"/>
</dbReference>
<dbReference type="GO" id="GO:0019877">
    <property type="term" value="P:diaminopimelate biosynthetic process"/>
    <property type="evidence" value="ECO:0007669"/>
    <property type="project" value="UniProtKB-UniRule"/>
</dbReference>
<dbReference type="GO" id="GO:0006526">
    <property type="term" value="P:L-arginine biosynthetic process"/>
    <property type="evidence" value="ECO:0007669"/>
    <property type="project" value="TreeGrafter"/>
</dbReference>
<dbReference type="GO" id="GO:0009089">
    <property type="term" value="P:lysine biosynthetic process via diaminopimelate"/>
    <property type="evidence" value="ECO:0007669"/>
    <property type="project" value="UniProtKB-UniRule"/>
</dbReference>
<dbReference type="CDD" id="cd03891">
    <property type="entry name" value="M20_DapE_proteobac"/>
    <property type="match status" value="1"/>
</dbReference>
<dbReference type="FunFam" id="3.30.70.360:FF:000011">
    <property type="entry name" value="Succinyl-diaminopimelate desuccinylase"/>
    <property type="match status" value="1"/>
</dbReference>
<dbReference type="FunFam" id="3.40.630.10:FF:000005">
    <property type="entry name" value="Succinyl-diaminopimelate desuccinylase"/>
    <property type="match status" value="1"/>
</dbReference>
<dbReference type="Gene3D" id="1.10.150.900">
    <property type="match status" value="1"/>
</dbReference>
<dbReference type="Gene3D" id="3.30.70.360">
    <property type="match status" value="1"/>
</dbReference>
<dbReference type="Gene3D" id="3.40.630.10">
    <property type="entry name" value="Zn peptidases"/>
    <property type="match status" value="1"/>
</dbReference>
<dbReference type="HAMAP" id="MF_01690">
    <property type="entry name" value="DapE"/>
    <property type="match status" value="1"/>
</dbReference>
<dbReference type="InterPro" id="IPR001261">
    <property type="entry name" value="ArgE/DapE_CS"/>
</dbReference>
<dbReference type="InterPro" id="IPR036264">
    <property type="entry name" value="Bact_exopeptidase_dim_dom"/>
</dbReference>
<dbReference type="InterPro" id="IPR005941">
    <property type="entry name" value="DapE_proteobac"/>
</dbReference>
<dbReference type="InterPro" id="IPR002933">
    <property type="entry name" value="Peptidase_M20"/>
</dbReference>
<dbReference type="InterPro" id="IPR011650">
    <property type="entry name" value="Peptidase_M20_dimer"/>
</dbReference>
<dbReference type="InterPro" id="IPR050072">
    <property type="entry name" value="Peptidase_M20A"/>
</dbReference>
<dbReference type="NCBIfam" id="TIGR01246">
    <property type="entry name" value="dapE_proteo"/>
    <property type="match status" value="1"/>
</dbReference>
<dbReference type="NCBIfam" id="NF009557">
    <property type="entry name" value="PRK13009.1"/>
    <property type="match status" value="1"/>
</dbReference>
<dbReference type="PANTHER" id="PTHR43808">
    <property type="entry name" value="ACETYLORNITHINE DEACETYLASE"/>
    <property type="match status" value="1"/>
</dbReference>
<dbReference type="PANTHER" id="PTHR43808:SF31">
    <property type="entry name" value="N-ACETYL-L-CITRULLINE DEACETYLASE"/>
    <property type="match status" value="1"/>
</dbReference>
<dbReference type="Pfam" id="PF07687">
    <property type="entry name" value="M20_dimer"/>
    <property type="match status" value="1"/>
</dbReference>
<dbReference type="Pfam" id="PF01546">
    <property type="entry name" value="Peptidase_M20"/>
    <property type="match status" value="1"/>
</dbReference>
<dbReference type="SUPFAM" id="SSF55031">
    <property type="entry name" value="Bacterial exopeptidase dimerisation domain"/>
    <property type="match status" value="1"/>
</dbReference>
<dbReference type="SUPFAM" id="SSF53187">
    <property type="entry name" value="Zn-dependent exopeptidases"/>
    <property type="match status" value="1"/>
</dbReference>
<dbReference type="PROSITE" id="PS00759">
    <property type="entry name" value="ARGE_DAPE_CPG2_2"/>
    <property type="match status" value="1"/>
</dbReference>
<protein>
    <recommendedName>
        <fullName evidence="1">Succinyl-diaminopimelate desuccinylase</fullName>
        <shortName evidence="1">SDAP desuccinylase</shortName>
        <ecNumber evidence="1">3.5.1.18</ecNumber>
    </recommendedName>
    <alternativeName>
        <fullName evidence="1">N-succinyl-LL-2,6-diaminoheptanedioate amidohydrolase</fullName>
    </alternativeName>
</protein>
<evidence type="ECO:0000255" key="1">
    <source>
        <dbReference type="HAMAP-Rule" id="MF_01690"/>
    </source>
</evidence>
<reference key="1">
    <citation type="submission" date="2007-05" db="EMBL/GenBank/DDBJ databases">
        <title>Complete sequence of Pseudomonas putida F1.</title>
        <authorList>
            <consortium name="US DOE Joint Genome Institute"/>
            <person name="Copeland A."/>
            <person name="Lucas S."/>
            <person name="Lapidus A."/>
            <person name="Barry K."/>
            <person name="Detter J.C."/>
            <person name="Glavina del Rio T."/>
            <person name="Hammon N."/>
            <person name="Israni S."/>
            <person name="Dalin E."/>
            <person name="Tice H."/>
            <person name="Pitluck S."/>
            <person name="Chain P."/>
            <person name="Malfatti S."/>
            <person name="Shin M."/>
            <person name="Vergez L."/>
            <person name="Schmutz J."/>
            <person name="Larimer F."/>
            <person name="Land M."/>
            <person name="Hauser L."/>
            <person name="Kyrpides N."/>
            <person name="Lykidis A."/>
            <person name="Parales R."/>
            <person name="Richardson P."/>
        </authorList>
    </citation>
    <scope>NUCLEOTIDE SEQUENCE [LARGE SCALE GENOMIC DNA]</scope>
    <source>
        <strain>ATCC 700007 / DSM 6899 / JCM 31910 / BCRC 17059 / LMG 24140 / F1</strain>
    </source>
</reference>
<name>DAPE_PSEP1</name>
<gene>
    <name evidence="1" type="primary">dapE</name>
    <name type="ordered locus">Pput_4199</name>
</gene>
<feature type="chain" id="PRO_0000375661" description="Succinyl-diaminopimelate desuccinylase">
    <location>
        <begin position="1"/>
        <end position="383"/>
    </location>
</feature>
<feature type="active site" evidence="1">
    <location>
        <position position="75"/>
    </location>
</feature>
<feature type="active site" description="Proton acceptor" evidence="1">
    <location>
        <position position="141"/>
    </location>
</feature>
<feature type="binding site" evidence="1">
    <location>
        <position position="73"/>
    </location>
    <ligand>
        <name>Zn(2+)</name>
        <dbReference type="ChEBI" id="CHEBI:29105"/>
        <label>1</label>
    </ligand>
</feature>
<feature type="binding site" evidence="1">
    <location>
        <position position="107"/>
    </location>
    <ligand>
        <name>Zn(2+)</name>
        <dbReference type="ChEBI" id="CHEBI:29105"/>
        <label>1</label>
    </ligand>
</feature>
<feature type="binding site" evidence="1">
    <location>
        <position position="107"/>
    </location>
    <ligand>
        <name>Zn(2+)</name>
        <dbReference type="ChEBI" id="CHEBI:29105"/>
        <label>2</label>
    </ligand>
</feature>
<feature type="binding site" evidence="1">
    <location>
        <position position="142"/>
    </location>
    <ligand>
        <name>Zn(2+)</name>
        <dbReference type="ChEBI" id="CHEBI:29105"/>
        <label>2</label>
    </ligand>
</feature>
<feature type="binding site" evidence="1">
    <location>
        <position position="170"/>
    </location>
    <ligand>
        <name>Zn(2+)</name>
        <dbReference type="ChEBI" id="CHEBI:29105"/>
        <label>1</label>
    </ligand>
</feature>
<feature type="binding site" evidence="1">
    <location>
        <position position="356"/>
    </location>
    <ligand>
        <name>Zn(2+)</name>
        <dbReference type="ChEBI" id="CHEBI:29105"/>
        <label>2</label>
    </ligand>
</feature>